<accession>Q487A4</accession>
<feature type="chain" id="PRO_0000288285" description="Isocitrate dehydrogenase kinase/phosphatase">
    <location>
        <begin position="1"/>
        <end position="589"/>
    </location>
</feature>
<feature type="active site" evidence="1">
    <location>
        <position position="373"/>
    </location>
</feature>
<feature type="binding site" evidence="1">
    <location>
        <begin position="317"/>
        <end position="323"/>
    </location>
    <ligand>
        <name>ATP</name>
        <dbReference type="ChEBI" id="CHEBI:30616"/>
    </ligand>
</feature>
<feature type="binding site" evidence="1">
    <location>
        <position position="338"/>
    </location>
    <ligand>
        <name>ATP</name>
        <dbReference type="ChEBI" id="CHEBI:30616"/>
    </ligand>
</feature>
<protein>
    <recommendedName>
        <fullName evidence="1">Isocitrate dehydrogenase kinase/phosphatase</fullName>
        <shortName evidence="1">IDH kinase/phosphatase</shortName>
        <shortName evidence="1">IDHK/P</shortName>
        <ecNumber evidence="1">2.7.11.5</ecNumber>
        <ecNumber evidence="1">3.1.3.-</ecNumber>
    </recommendedName>
</protein>
<evidence type="ECO:0000255" key="1">
    <source>
        <dbReference type="HAMAP-Rule" id="MF_00747"/>
    </source>
</evidence>
<dbReference type="EC" id="2.7.11.5" evidence="1"/>
<dbReference type="EC" id="3.1.3.-" evidence="1"/>
<dbReference type="EMBL" id="CP000083">
    <property type="protein sequence ID" value="AAZ27754.1"/>
    <property type="molecule type" value="Genomic_DNA"/>
</dbReference>
<dbReference type="RefSeq" id="WP_011041955.1">
    <property type="nucleotide sequence ID" value="NC_003910.7"/>
</dbReference>
<dbReference type="SMR" id="Q487A4"/>
<dbReference type="STRING" id="167879.CPS_1118"/>
<dbReference type="KEGG" id="cps:CPS_1118"/>
<dbReference type="eggNOG" id="COG4579">
    <property type="taxonomic scope" value="Bacteria"/>
</dbReference>
<dbReference type="HOGENOM" id="CLU_033804_1_1_6"/>
<dbReference type="Proteomes" id="UP000000547">
    <property type="component" value="Chromosome"/>
</dbReference>
<dbReference type="GO" id="GO:0005737">
    <property type="term" value="C:cytoplasm"/>
    <property type="evidence" value="ECO:0007669"/>
    <property type="project" value="UniProtKB-SubCell"/>
</dbReference>
<dbReference type="GO" id="GO:0008772">
    <property type="term" value="F:[isocitrate dehydrogenase (NADP+)] kinase activity"/>
    <property type="evidence" value="ECO:0007669"/>
    <property type="project" value="UniProtKB-UniRule"/>
</dbReference>
<dbReference type="GO" id="GO:0016208">
    <property type="term" value="F:AMP binding"/>
    <property type="evidence" value="ECO:0007669"/>
    <property type="project" value="TreeGrafter"/>
</dbReference>
<dbReference type="GO" id="GO:0005524">
    <property type="term" value="F:ATP binding"/>
    <property type="evidence" value="ECO:0007669"/>
    <property type="project" value="UniProtKB-UniRule"/>
</dbReference>
<dbReference type="GO" id="GO:0004721">
    <property type="term" value="F:phosphoprotein phosphatase activity"/>
    <property type="evidence" value="ECO:0007669"/>
    <property type="project" value="UniProtKB-KW"/>
</dbReference>
<dbReference type="GO" id="GO:0004674">
    <property type="term" value="F:protein serine/threonine kinase activity"/>
    <property type="evidence" value="ECO:0007669"/>
    <property type="project" value="UniProtKB-KW"/>
</dbReference>
<dbReference type="GO" id="GO:0006006">
    <property type="term" value="P:glucose metabolic process"/>
    <property type="evidence" value="ECO:0007669"/>
    <property type="project" value="InterPro"/>
</dbReference>
<dbReference type="GO" id="GO:0006097">
    <property type="term" value="P:glyoxylate cycle"/>
    <property type="evidence" value="ECO:0007669"/>
    <property type="project" value="UniProtKB-UniRule"/>
</dbReference>
<dbReference type="GO" id="GO:0006099">
    <property type="term" value="P:tricarboxylic acid cycle"/>
    <property type="evidence" value="ECO:0007669"/>
    <property type="project" value="UniProtKB-UniRule"/>
</dbReference>
<dbReference type="HAMAP" id="MF_00747">
    <property type="entry name" value="AceK"/>
    <property type="match status" value="1"/>
</dbReference>
<dbReference type="InterPro" id="IPR046855">
    <property type="entry name" value="AceK_kinase"/>
</dbReference>
<dbReference type="InterPro" id="IPR046854">
    <property type="entry name" value="AceK_regulatory"/>
</dbReference>
<dbReference type="InterPro" id="IPR010452">
    <property type="entry name" value="Isocitrate_DH_AceK"/>
</dbReference>
<dbReference type="NCBIfam" id="NF002804">
    <property type="entry name" value="PRK02946.1"/>
    <property type="match status" value="1"/>
</dbReference>
<dbReference type="PANTHER" id="PTHR39559">
    <property type="match status" value="1"/>
</dbReference>
<dbReference type="PANTHER" id="PTHR39559:SF1">
    <property type="entry name" value="ISOCITRATE DEHYDROGENASE KINASE_PHOSPHATASE"/>
    <property type="match status" value="1"/>
</dbReference>
<dbReference type="Pfam" id="PF06315">
    <property type="entry name" value="AceK_kinase"/>
    <property type="match status" value="1"/>
</dbReference>
<dbReference type="Pfam" id="PF20423">
    <property type="entry name" value="AceK_regulatory"/>
    <property type="match status" value="1"/>
</dbReference>
<dbReference type="PIRSF" id="PIRSF000719">
    <property type="entry name" value="AceK"/>
    <property type="match status" value="1"/>
</dbReference>
<keyword id="KW-0067">ATP-binding</keyword>
<keyword id="KW-0963">Cytoplasm</keyword>
<keyword id="KW-0329">Glyoxylate bypass</keyword>
<keyword id="KW-0378">Hydrolase</keyword>
<keyword id="KW-0418">Kinase</keyword>
<keyword id="KW-0547">Nucleotide-binding</keyword>
<keyword id="KW-0904">Protein phosphatase</keyword>
<keyword id="KW-0723">Serine/threonine-protein kinase</keyword>
<keyword id="KW-0808">Transferase</keyword>
<keyword id="KW-0816">Tricarboxylic acid cycle</keyword>
<proteinExistence type="inferred from homology"/>
<gene>
    <name evidence="1" type="primary">aceK</name>
    <name type="ordered locus">CPS_1118</name>
</gene>
<sequence>MKDELALTIANTIINGFERHFAIFTEITQSARNRFQQCQWNEIHRSARARTNFYDERVKETFNDIKEDFNISSLDDALWQRVKAVYSDLLINHKQPELAETFYNSVFCHLFERKYYHNDYIYVESTAHRLDDKTQPEIYTSYQPKELGLKQTICDIMNSHRTVIPFEDLDRDVDALINTFRRKAHKTRVKLEDLKFDILNFTFYRNKGAYLIGRVLSPAGETPFIIAVLNNEKGGLYIDALLTSSESMAVVFGFARAYFFVDCEHPYALVNFLQGLMPHKTKADLYSAIGFHKQGKTQFYRDFLNHLDSSDDQFELAAGIKGMVMSVFTLPSYPYVFKIIKDKFSPSKNITKKDVKGKYRLVKLHDRVGRMADTMEYSEVAFPKSRFNDELLAELQKVAPSIIRYEGEGEEALIIIEHLYIERRMVPLNLYLMDALKNKAQQKIDDALFGYGQAIKQLISADIFPGDMLLKNFGVTRHGRVIFYDYDEIAYMNEINFRVKPKAVTEEQLYAAEPWYSVMPGDMFPEELATFALANPSYLKAFKIHHEDLLTAAYWQQCQQDVANGIYKDVFPYPDKYRFCNLSFGSIKR</sequence>
<name>ACEK_COLP3</name>
<organism>
    <name type="scientific">Colwellia psychrerythraea (strain 34H / ATCC BAA-681)</name>
    <name type="common">Vibrio psychroerythus</name>
    <dbReference type="NCBI Taxonomy" id="167879"/>
    <lineage>
        <taxon>Bacteria</taxon>
        <taxon>Pseudomonadati</taxon>
        <taxon>Pseudomonadota</taxon>
        <taxon>Gammaproteobacteria</taxon>
        <taxon>Alteromonadales</taxon>
        <taxon>Colwelliaceae</taxon>
        <taxon>Colwellia</taxon>
    </lineage>
</organism>
<reference key="1">
    <citation type="journal article" date="2005" name="Proc. Natl. Acad. Sci. U.S.A.">
        <title>The psychrophilic lifestyle as revealed by the genome sequence of Colwellia psychrerythraea 34H through genomic and proteomic analyses.</title>
        <authorList>
            <person name="Methe B.A."/>
            <person name="Nelson K.E."/>
            <person name="Deming J.W."/>
            <person name="Momen B."/>
            <person name="Melamud E."/>
            <person name="Zhang X."/>
            <person name="Moult J."/>
            <person name="Madupu R."/>
            <person name="Nelson W.C."/>
            <person name="Dodson R.J."/>
            <person name="Brinkac L.M."/>
            <person name="Daugherty S.C."/>
            <person name="Durkin A.S."/>
            <person name="DeBoy R.T."/>
            <person name="Kolonay J.F."/>
            <person name="Sullivan S.A."/>
            <person name="Zhou L."/>
            <person name="Davidsen T.M."/>
            <person name="Wu M."/>
            <person name="Huston A.L."/>
            <person name="Lewis M."/>
            <person name="Weaver B."/>
            <person name="Weidman J.F."/>
            <person name="Khouri H."/>
            <person name="Utterback T.R."/>
            <person name="Feldblyum T.V."/>
            <person name="Fraser C.M."/>
        </authorList>
    </citation>
    <scope>NUCLEOTIDE SEQUENCE [LARGE SCALE GENOMIC DNA]</scope>
    <source>
        <strain>34H / ATCC BAA-681</strain>
    </source>
</reference>
<comment type="function">
    <text evidence="1">Bifunctional enzyme which can phosphorylate or dephosphorylate isocitrate dehydrogenase (IDH) on a specific serine residue. This is a regulatory mechanism which enables bacteria to bypass the Krebs cycle via the glyoxylate shunt in response to the source of carbon. When bacteria are grown on glucose, IDH is fully active and unphosphorylated, but when grown on acetate or ethanol, the activity of IDH declines drastically concomitant with its phosphorylation.</text>
</comment>
<comment type="catalytic activity">
    <reaction evidence="1">
        <text>L-seryl-[isocitrate dehydrogenase] + ATP = O-phospho-L-seryl-[isocitrate dehydrogenase] + ADP + H(+)</text>
        <dbReference type="Rhea" id="RHEA:43540"/>
        <dbReference type="Rhea" id="RHEA-COMP:10605"/>
        <dbReference type="Rhea" id="RHEA-COMP:10606"/>
        <dbReference type="ChEBI" id="CHEBI:15378"/>
        <dbReference type="ChEBI" id="CHEBI:29999"/>
        <dbReference type="ChEBI" id="CHEBI:30616"/>
        <dbReference type="ChEBI" id="CHEBI:83421"/>
        <dbReference type="ChEBI" id="CHEBI:456216"/>
        <dbReference type="EC" id="2.7.11.5"/>
    </reaction>
</comment>
<comment type="subcellular location">
    <subcellularLocation>
        <location evidence="1">Cytoplasm</location>
    </subcellularLocation>
</comment>
<comment type="similarity">
    <text evidence="1">Belongs to the AceK family.</text>
</comment>